<accession>Q84DC4</accession>
<organism>
    <name type="scientific">Pseudomonas putida</name>
    <name type="common">Arthrobacter siderocapsulatus</name>
    <dbReference type="NCBI Taxonomy" id="303"/>
    <lineage>
        <taxon>Bacteria</taxon>
        <taxon>Pseudomonadati</taxon>
        <taxon>Pseudomonadota</taxon>
        <taxon>Gammaproteobacteria</taxon>
        <taxon>Pseudomonadales</taxon>
        <taxon>Pseudomonadaceae</taxon>
        <taxon>Pseudomonas</taxon>
    </lineage>
</organism>
<proteinExistence type="evidence at protein level"/>
<gene>
    <name evidence="10" type="primary">mdlY</name>
</gene>
<sequence length="507" mass="53814">MRHPVDMPEKVGTDAKRLFAQPEHLWELTLTEASALVRHRRITSRQLVEAWLSRIADFSELNAFISVDAAAALKQADSYDHYLEAGGDPLPLGGVPIAVKDNIQVVGFANTAGTPALSKFFPTCNARVIEPLLKAGAIVVGKTNMHELAFGTSGYNTAYHIPGVIGVRNAFDHSCIAGGSSSGSGTAVGALLIPAALGTDTGGSVRQPGAVNGCVGFRPTVGRYPVDGITPISPTRDTPGPIARSVEDIVLLDSIITGALPAEVPAAESIRLGVVDQLWADLSEPVRKLTEDALRKLEQQGVQIVRVSMSEIFEMSHAVSMPLALHECRSALTEYLSANETGVSFDELVAGISSPDVRTIFEDYILPGRLGELEGQSVDLEQAYATAMKDARPKLIQSFEFLFKEHQLDAIIHPTTPDLAIKSNPAATSFEAFARMIRNADPASNAGMPGISLPAGLSQQEGLPVGIEIEGLPGSDARLLSIANFIESILGRGPTPTRSGVESKISM</sequence>
<reference evidence="9 10" key="1">
    <citation type="journal article" date="2003" name="J. Bacteriol.">
        <title>Identification and characterization of a mandelamide hydrolase and an NAD(P)+-dependent benzaldehyde dehydrogenase from Pseudomonas putida ATCC 12633.</title>
        <authorList>
            <person name="McLeish M.J."/>
            <person name="Kneen M.M."/>
            <person name="Gopalakrishna K.N."/>
            <person name="Koo C.W."/>
            <person name="Babbitt P.C."/>
            <person name="Gerlt J.A."/>
            <person name="Kenyon G.L."/>
        </authorList>
    </citation>
    <scope>NUCLEOTIDE SEQUENCE [GENOMIC DNA]</scope>
    <scope>FUNCTION</scope>
    <scope>CATALYTIC ACTIVITY</scope>
    <scope>BIOPHYSICOCHEMICAL PROPERTIES</scope>
    <scope>ACTIVITY REGULATION</scope>
    <scope>SUBUNIT</scope>
    <scope>INDUCTION</scope>
    <scope>MASS SPECTROMETRY</scope>
    <source>
        <strain>ATCC 12633 / DSM 291 / JCM 13063 / CCUG 12690 / LMG 2257 / NBRC 14164 / NCIMB 9494 / NCTC 10936 / VKM B-2187 / Stanier 90</strain>
    </source>
</reference>
<reference evidence="9" key="2">
    <citation type="journal article" date="2004" name="Biochemistry">
        <title>Mandelamide hydrolase from Pseudomonas putida: characterization of a new member of the amidase signature family.</title>
        <authorList>
            <person name="Gopalakrishna K.N."/>
            <person name="Stewart B.H."/>
            <person name="Kneen M.M."/>
            <person name="Andricopulo A.D."/>
            <person name="Kenyon G.L."/>
            <person name="McLeish M.J."/>
        </authorList>
    </citation>
    <scope>FUNCTION</scope>
    <scope>CATALYTIC ACTIVITY</scope>
    <scope>BIOPHYSICOCHEMICAL PROPERTIES</scope>
    <scope>MASS SPECTROMETRY</scope>
    <scope>MUTAGENESIS OF LYS-100; SER-180; SER-181 AND SER-204</scope>
</reference>
<reference evidence="9" key="3">
    <citation type="journal article" date="2009" name="Protein Eng. Des. Sel.">
        <title>Using directed evolution to probe the substrate specificity of mandelamide hydrolase.</title>
        <authorList>
            <person name="Wang P.F."/>
            <person name="Yep A."/>
            <person name="Kenyon G.L."/>
            <person name="McLeish M.J."/>
        </authorList>
    </citation>
    <scope>FUNCTION</scope>
    <scope>CATALYTIC ACTIVITY</scope>
    <scope>MUTAGENESIS OF THR-31; GLY-202; GLN-207; SER-316; GLN-382 AND ILE-437</scope>
</reference>
<keyword id="KW-0378">Hydrolase</keyword>
<protein>
    <recommendedName>
        <fullName evidence="6 7 8 10">Mandelamide hydrolase</fullName>
        <ecNumber>3.5.1.86</ecNumber>
    </recommendedName>
</protein>
<evidence type="ECO:0000250" key="1">
    <source>
        <dbReference type="UniProtKB" id="P97612"/>
    </source>
</evidence>
<evidence type="ECO:0000255" key="2"/>
<evidence type="ECO:0000269" key="3">
    <source>
    </source>
</evidence>
<evidence type="ECO:0000269" key="4">
    <source>
    </source>
</evidence>
<evidence type="ECO:0000269" key="5">
    <source>
    </source>
</evidence>
<evidence type="ECO:0000303" key="6">
    <source>
    </source>
</evidence>
<evidence type="ECO:0000303" key="7">
    <source>
    </source>
</evidence>
<evidence type="ECO:0000303" key="8">
    <source>
    </source>
</evidence>
<evidence type="ECO:0000305" key="9"/>
<evidence type="ECO:0000312" key="10">
    <source>
        <dbReference type="EMBL" id="AAO23019.1"/>
    </source>
</evidence>
<feature type="chain" id="PRO_0000403312" description="Mandelamide hydrolase">
    <location>
        <begin position="1"/>
        <end position="507"/>
    </location>
</feature>
<feature type="active site" description="Charge relay system" evidence="1">
    <location>
        <position position="100"/>
    </location>
</feature>
<feature type="active site" description="Charge relay system" evidence="1">
    <location>
        <position position="180"/>
    </location>
</feature>
<feature type="active site" description="Acyl-ester intermediate" evidence="1">
    <location>
        <position position="204"/>
    </location>
</feature>
<feature type="mutagenesis site" description="More active on the (S)-enantiomers of mandelamide and lactamide than the (R)-enantiomers; when associated with N-437." evidence="5">
    <original>T</original>
    <variation>I</variation>
    <location>
        <position position="31"/>
    </location>
</feature>
<feature type="mutagenesis site" description="Abolishes activity on mandelamide." evidence="4">
    <original>K</original>
    <variation>A</variation>
    <location>
        <position position="100"/>
    </location>
</feature>
<feature type="mutagenesis site" description="Significantly decreases activity on mandelamide." evidence="4">
    <original>S</original>
    <variation>A</variation>
    <location>
        <position position="180"/>
    </location>
</feature>
<feature type="mutagenesis site" description="Significantly decreases activity on mandelamide." evidence="4">
    <original>S</original>
    <variation>A</variation>
    <location>
        <position position="181"/>
    </location>
</feature>
<feature type="mutagenesis site" description="Increase in KM values for aromatic substrates, but not aliphatic substrates. Active against lactamide but not against mandelamide; when associated with H-207 and E-382." evidence="5">
    <original>G</original>
    <variation>A</variation>
    <location>
        <position position="202"/>
    </location>
</feature>
<feature type="mutagenesis site" description="Increase in KM values for aromatic substrates, but not aliphatic substrates." evidence="5">
    <original>G</original>
    <variation>V</variation>
    <location>
        <position position="202"/>
    </location>
</feature>
<feature type="mutagenesis site" description="Abolishes activity on mandelamide." evidence="4">
    <original>S</original>
    <variation>A</variation>
    <location>
        <position position="204"/>
    </location>
</feature>
<feature type="mutagenesis site" description="Increases activity on lactamide, does not affect activity on mandelamide; when associated with E-382. Active against lactamide but not against mandelamide; when associated with A-202 and E-382. More active on the (S)-enantiomers of mandelamide and lactamide than the (R)-enantiomers; when associated with S-316 and N-437." evidence="5">
    <original>Q</original>
    <variation>H</variation>
    <location>
        <position position="207"/>
    </location>
</feature>
<feature type="mutagenesis site" description="More active on the (S)-enantiomers of mandelamide and lactamide than the (R)-enantiomers; when associated with H-207 and N-437." evidence="5">
    <original>S</original>
    <variation>N</variation>
    <location>
        <position position="316"/>
    </location>
</feature>
<feature type="mutagenesis site" description="Increases activity on lactamide, does not affect activity on mandelamide; when associated with H-207. Active against lactamide but not against mandelamide; when associated with A-202 and H-207." evidence="5">
    <original>Q</original>
    <variation>H</variation>
    <location>
        <position position="382"/>
    </location>
</feature>
<feature type="mutagenesis site" description="More active on the (S)-enantiomers of mandelamide and lactamide than the (R)-enantiomers. More active on the (S)-enantiomers of mandelamide and lactamide than the (R)-enantiomers; when associated with I-31. More active on the (S)-enantiomers of mandelamide and lactamide than the (R)-enantiomers; when associated with H-207 and N-316." evidence="5">
    <original>I</original>
    <variation>N</variation>
    <location>
        <position position="437"/>
    </location>
</feature>
<name>MANHY_PSEPU</name>
<comment type="function">
    <text evidence="3 4 5">Hydrolyzes both the R- and the S-enantiomers of mandelamide, and phenylacetamide. Has lower activity on 3-phenylpropionaide and lactamide. Does not hydrolyze benzamide. Hydrolyzes esters and amides with little steric bulk. Preferentially hydrolyzes aromatic substrates.</text>
</comment>
<comment type="catalytic activity">
    <reaction evidence="3 4 5">
        <text>(R)-mandelamide + H2O = (R)-mandelate + NH4(+)</text>
        <dbReference type="Rhea" id="RHEA:22876"/>
        <dbReference type="ChEBI" id="CHEBI:15377"/>
        <dbReference type="ChEBI" id="CHEBI:17352"/>
        <dbReference type="ChEBI" id="CHEBI:28938"/>
        <dbReference type="ChEBI" id="CHEBI:32382"/>
        <dbReference type="EC" id="3.5.1.86"/>
    </reaction>
</comment>
<comment type="activity regulation">
    <text evidence="3">Inhibited by 3,4-dichloroisocoumarin and PMSF.</text>
</comment>
<comment type="biophysicochemical properties">
    <kinetics>
        <KM evidence="3">34.2 uM for (R)-mandelamide (at 30 degrees Celsius, pH 7.8)</KM>
        <KM evidence="3">19.8 uM for (S)-mandelamide (at 30 degrees Celsius, pH 7.8)</KM>
        <KM evidence="4">33.1 uM for (R)-mandelamide (at 30 degrees Celsius, pH 7.8)</KM>
        <KM evidence="4">19.9 uM for (S)-mandelamide (at 30 degrees Celsius, pH 7.8)</KM>
        <KM evidence="4">3.8 uM for 2-phenylacetamide (at 30 degrees Celsius, pH 7.8)</KM>
        <KM evidence="4">49 uM for 3-phenylpropionamide (at 30 degrees Celsius, pH 7.8)</KM>
        <KM evidence="4">357 uM for (R)-2-methoxy-2-phenylacetamide (at 30 degrees Celsius, pH 7.8)</KM>
        <KM evidence="4">32 uM for N-methyl phenylacetamide (at 30 degrees Celsius, pH 7.8)</KM>
        <KM evidence="4">170 uM for (R,S)-methyl mandelate (at 30 degrees Celsius, pH 7.8)</KM>
        <KM evidence="4">288 uM for hexanoamide (at 30 degrees Celsius, pH 7.8)</KM>
    </kinetics>
    <phDependence>
        <text evidence="3 4">Optimum pH is 7.8.</text>
    </phDependence>
</comment>
<comment type="subunit">
    <text evidence="3">Monomer.</text>
</comment>
<comment type="induction">
    <text evidence="3">By growth on R,S-mandelamide, and to a lesser extent mandelate.</text>
</comment>
<comment type="mass spectrometry" mass="53820.0" error="4.0" method="Electrospray" evidence="3 4"/>
<comment type="mass spectrometry" mass="53824.0" method="Electrospray" evidence="3 4"/>
<comment type="similarity">
    <text evidence="2">Belongs to the amidase family.</text>
</comment>
<dbReference type="EC" id="3.5.1.86"/>
<dbReference type="EMBL" id="AY143338">
    <property type="protein sequence ID" value="AAO23019.1"/>
    <property type="molecule type" value="Genomic_DNA"/>
</dbReference>
<dbReference type="SMR" id="Q84DC4"/>
<dbReference type="BRENDA" id="3.5.1.86">
    <property type="organism ID" value="5092"/>
</dbReference>
<dbReference type="GO" id="GO:0050537">
    <property type="term" value="F:mandelamide amidase activity"/>
    <property type="evidence" value="ECO:0000314"/>
    <property type="project" value="UniProtKB"/>
</dbReference>
<dbReference type="FunFam" id="3.90.1300.10:FF:000022">
    <property type="entry name" value="Indole acetamide hydrolase"/>
    <property type="match status" value="1"/>
</dbReference>
<dbReference type="Gene3D" id="3.90.1300.10">
    <property type="entry name" value="Amidase signature (AS) domain"/>
    <property type="match status" value="1"/>
</dbReference>
<dbReference type="InterPro" id="IPR000120">
    <property type="entry name" value="Amidase"/>
</dbReference>
<dbReference type="InterPro" id="IPR020556">
    <property type="entry name" value="Amidase_CS"/>
</dbReference>
<dbReference type="InterPro" id="IPR023631">
    <property type="entry name" value="Amidase_dom"/>
</dbReference>
<dbReference type="InterPro" id="IPR036928">
    <property type="entry name" value="AS_sf"/>
</dbReference>
<dbReference type="NCBIfam" id="NF005688">
    <property type="entry name" value="PRK07488.1"/>
    <property type="match status" value="1"/>
</dbReference>
<dbReference type="PANTHER" id="PTHR11895:SF151">
    <property type="entry name" value="GLUTAMYL-TRNA(GLN) AMIDOTRANSFERASE SUBUNIT A"/>
    <property type="match status" value="1"/>
</dbReference>
<dbReference type="PANTHER" id="PTHR11895">
    <property type="entry name" value="TRANSAMIDASE"/>
    <property type="match status" value="1"/>
</dbReference>
<dbReference type="Pfam" id="PF01425">
    <property type="entry name" value="Amidase"/>
    <property type="match status" value="1"/>
</dbReference>
<dbReference type="SUPFAM" id="SSF75304">
    <property type="entry name" value="Amidase signature (AS) enzymes"/>
    <property type="match status" value="1"/>
</dbReference>
<dbReference type="PROSITE" id="PS00571">
    <property type="entry name" value="AMIDASES"/>
    <property type="match status" value="1"/>
</dbReference>